<reference key="1">
    <citation type="journal article" date="2002" name="Nat. Neurosci.">
        <title>The olfactory receptor gene superfamily of the mouse.</title>
        <authorList>
            <person name="Zhang X."/>
            <person name="Firestein S."/>
        </authorList>
    </citation>
    <scope>NUCLEOTIDE SEQUENCE [GENOMIC DNA]</scope>
</reference>
<reference key="2">
    <citation type="journal article" date="2002" name="Hum. Mol. Genet.">
        <title>Different evolutionary processes shaped the mouse and human olfactory receptor gene families.</title>
        <authorList>
            <person name="Young J.M."/>
            <person name="Friedman C."/>
            <person name="Williams E.M."/>
            <person name="Ross J.A."/>
            <person name="Tonnes-Priddy L."/>
            <person name="Trask B.J."/>
        </authorList>
    </citation>
    <scope>NUCLEOTIDE SEQUENCE [GENOMIC DNA]</scope>
</reference>
<reference key="3">
    <citation type="journal article" date="2002" name="Hum. Mol. Genet.">
        <authorList>
            <person name="Young J.M."/>
            <person name="Friedman C."/>
            <person name="Williams E.M."/>
            <person name="Ross J.A."/>
            <person name="Tonnes-Priddy L."/>
            <person name="Trask B.J."/>
        </authorList>
    </citation>
    <scope>ERRATUM OF PUBMED:11875048</scope>
</reference>
<reference evidence="4" key="4">
    <citation type="journal article" date="2004" name="Genome Res.">
        <title>The status, quality, and expansion of the NIH full-length cDNA project: the Mammalian Gene Collection (MGC).</title>
        <authorList>
            <consortium name="The MGC Project Team"/>
        </authorList>
    </citation>
    <scope>NUCLEOTIDE SEQUENCE [LARGE SCALE MRNA]</scope>
    <source>
        <tissue evidence="4">Brain</tissue>
    </source>
</reference>
<organism>
    <name type="scientific">Mus musculus</name>
    <name type="common">Mouse</name>
    <dbReference type="NCBI Taxonomy" id="10090"/>
    <lineage>
        <taxon>Eukaryota</taxon>
        <taxon>Metazoa</taxon>
        <taxon>Chordata</taxon>
        <taxon>Craniata</taxon>
        <taxon>Vertebrata</taxon>
        <taxon>Euteleostomi</taxon>
        <taxon>Mammalia</taxon>
        <taxon>Eutheria</taxon>
        <taxon>Euarchontoglires</taxon>
        <taxon>Glires</taxon>
        <taxon>Rodentia</taxon>
        <taxon>Myomorpha</taxon>
        <taxon>Muroidea</taxon>
        <taxon>Muridae</taxon>
        <taxon>Murinae</taxon>
        <taxon>Mus</taxon>
        <taxon>Mus</taxon>
    </lineage>
</organism>
<sequence>MVRSGKGIQNKNATEVTEFILLGLSDNPDLQGVLFALFLIIYTMTLVGNLGMMALIKIDRSLHTPMYFFLSSLSFVDASYSSSVTPKMLVNLMAEDKSISFNGCATQFFFFGSFLGTECFLLAMMAYDRYAAIWNPLLYPVLMSGRICFMLVSTSFLAGFGNAAIHTGMTFRLSFCGSNKINHFYCDTPPLLKLSCSDTHINGIVIMAFSSFNVISCVLIVLISYLCILIAILKMPSAEGRHKAFSTCASHLMAVTIFFGTILFMYLRPTSSYSMEQDKVVSVFYTVVIPMLNPLIYSLKNKDVKKAVKKILHNYVV</sequence>
<name>O5AP2_MOUSE</name>
<feature type="chain" id="PRO_0000150861" description="Olfactory receptor 5AP2">
    <location>
        <begin position="1"/>
        <end position="317"/>
    </location>
</feature>
<feature type="topological domain" description="Extracellular" evidence="1">
    <location>
        <begin position="1"/>
        <end position="32"/>
    </location>
</feature>
<feature type="transmembrane region" description="Helical; Name=1" evidence="1">
    <location>
        <begin position="33"/>
        <end position="53"/>
    </location>
</feature>
<feature type="topological domain" description="Cytoplasmic" evidence="1">
    <location>
        <begin position="54"/>
        <end position="61"/>
    </location>
</feature>
<feature type="transmembrane region" description="Helical; Name=2" evidence="1">
    <location>
        <begin position="62"/>
        <end position="82"/>
    </location>
</feature>
<feature type="topological domain" description="Extracellular" evidence="1">
    <location>
        <begin position="83"/>
        <end position="106"/>
    </location>
</feature>
<feature type="transmembrane region" description="Helical; Name=3" evidence="1">
    <location>
        <begin position="107"/>
        <end position="127"/>
    </location>
</feature>
<feature type="topological domain" description="Cytoplasmic" evidence="1">
    <location>
        <begin position="128"/>
        <end position="140"/>
    </location>
</feature>
<feature type="transmembrane region" description="Helical; Name=4" evidence="1">
    <location>
        <begin position="141"/>
        <end position="161"/>
    </location>
</feature>
<feature type="topological domain" description="Extracellular" evidence="1">
    <location>
        <begin position="162"/>
        <end position="203"/>
    </location>
</feature>
<feature type="transmembrane region" description="Helical; Name=5" evidence="1">
    <location>
        <begin position="204"/>
        <end position="224"/>
    </location>
</feature>
<feature type="topological domain" description="Cytoplasmic" evidence="1">
    <location>
        <begin position="225"/>
        <end position="244"/>
    </location>
</feature>
<feature type="transmembrane region" description="Helical; Name=6" evidence="1">
    <location>
        <begin position="245"/>
        <end position="265"/>
    </location>
</feature>
<feature type="topological domain" description="Extracellular" evidence="1">
    <location>
        <begin position="266"/>
        <end position="278"/>
    </location>
</feature>
<feature type="transmembrane region" description="Helical; Name=7" evidence="1">
    <location>
        <begin position="279"/>
        <end position="299"/>
    </location>
</feature>
<feature type="topological domain" description="Cytoplasmic" evidence="1">
    <location>
        <begin position="300"/>
        <end position="317"/>
    </location>
</feature>
<feature type="glycosylation site" description="N-linked (GlcNAc...) asparagine" evidence="1">
    <location>
        <position position="12"/>
    </location>
</feature>
<feature type="disulfide bond" evidence="2">
    <location>
        <begin position="104"/>
        <end position="196"/>
    </location>
</feature>
<proteinExistence type="evidence at transcript level"/>
<comment type="function">
    <text evidence="3">Odorant receptor.</text>
</comment>
<comment type="subcellular location">
    <subcellularLocation>
        <location evidence="3">Cell membrane</location>
        <topology evidence="1">Multi-pass membrane protein</topology>
    </subcellularLocation>
</comment>
<comment type="similarity">
    <text evidence="2">Belongs to the G-protein coupled receptor 1 family.</text>
</comment>
<accession>Q8VFK7</accession>
<accession>A0A1L1STE7</accession>
<accession>Q0VEQ7</accession>
<evidence type="ECO:0000255" key="1"/>
<evidence type="ECO:0000255" key="2">
    <source>
        <dbReference type="PROSITE-ProRule" id="PRU00521"/>
    </source>
</evidence>
<evidence type="ECO:0000305" key="3"/>
<evidence type="ECO:0000312" key="4">
    <source>
        <dbReference type="EMBL" id="AAI19148.1"/>
    </source>
</evidence>
<evidence type="ECO:0000312" key="5">
    <source>
        <dbReference type="MGI" id="MGI:3030854"/>
    </source>
</evidence>
<keyword id="KW-1003">Cell membrane</keyword>
<keyword id="KW-1015">Disulfide bond</keyword>
<keyword id="KW-0297">G-protein coupled receptor</keyword>
<keyword id="KW-0325">Glycoprotein</keyword>
<keyword id="KW-0472">Membrane</keyword>
<keyword id="KW-0552">Olfaction</keyword>
<keyword id="KW-0675">Receptor</keyword>
<keyword id="KW-1185">Reference proteome</keyword>
<keyword id="KW-0716">Sensory transduction</keyword>
<keyword id="KW-0807">Transducer</keyword>
<keyword id="KW-0812">Transmembrane</keyword>
<keyword id="KW-1133">Transmembrane helix</keyword>
<gene>
    <name evidence="5" type="primary">Or5ap2</name>
    <name evidence="5" type="synonym">Mor201-2</name>
    <name evidence="5" type="synonym">Olfr1020</name>
</gene>
<dbReference type="EMBL" id="AY073517">
    <property type="protein sequence ID" value="AAL61180.1"/>
    <property type="molecule type" value="Genomic_DNA"/>
</dbReference>
<dbReference type="EMBL" id="AY318215">
    <property type="protein sequence ID" value="AAP71470.1"/>
    <property type="molecule type" value="Genomic_DNA"/>
</dbReference>
<dbReference type="EMBL" id="BC119145">
    <property type="protein sequence ID" value="AAI19146.1"/>
    <property type="molecule type" value="mRNA"/>
</dbReference>
<dbReference type="EMBL" id="BC119147">
    <property type="protein sequence ID" value="AAI19148.1"/>
    <property type="molecule type" value="mRNA"/>
</dbReference>
<dbReference type="CCDS" id="CCDS16224.1"/>
<dbReference type="RefSeq" id="NP_666791.1">
    <property type="nucleotide sequence ID" value="NM_146580.2"/>
</dbReference>
<dbReference type="SMR" id="Q8VFK7"/>
<dbReference type="FunCoup" id="Q8VFK7">
    <property type="interactions" value="1278"/>
</dbReference>
<dbReference type="STRING" id="10090.ENSMUSP00000150285"/>
<dbReference type="GlyCosmos" id="Q8VFK7">
    <property type="glycosylation" value="1 site, No reported glycans"/>
</dbReference>
<dbReference type="GlyGen" id="Q8VFK7">
    <property type="glycosylation" value="1 site"/>
</dbReference>
<dbReference type="iPTMnet" id="Q8VFK7"/>
<dbReference type="PhosphoSitePlus" id="Q8VFK7"/>
<dbReference type="PaxDb" id="10090-ENSMUSP00000058242"/>
<dbReference type="Antibodypedia" id="58995">
    <property type="antibodies" value="49 antibodies from 16 providers"/>
</dbReference>
<dbReference type="Ensembl" id="ENSMUST00000055840.7">
    <property type="protein sequence ID" value="ENSMUSP00000058242.5"/>
    <property type="gene ID" value="ENSMUSG00000046975.8"/>
</dbReference>
<dbReference type="Ensembl" id="ENSMUST00000215347.3">
    <property type="protein sequence ID" value="ENSMUSP00000150285.3"/>
    <property type="gene ID" value="ENSMUSG00000046975.8"/>
</dbReference>
<dbReference type="GeneID" id="258573"/>
<dbReference type="KEGG" id="mmu:258573"/>
<dbReference type="UCSC" id="uc008kla.2">
    <property type="organism name" value="mouse"/>
</dbReference>
<dbReference type="AGR" id="MGI:3030854"/>
<dbReference type="CTD" id="338675"/>
<dbReference type="MGI" id="MGI:3030854">
    <property type="gene designation" value="Or5ap2"/>
</dbReference>
<dbReference type="VEuPathDB" id="HostDB:ENSMUSG00000046975"/>
<dbReference type="eggNOG" id="ENOG502RF13">
    <property type="taxonomic scope" value="Eukaryota"/>
</dbReference>
<dbReference type="GeneTree" id="ENSGT01130000278309"/>
<dbReference type="HOGENOM" id="CLU_012526_0_1_1"/>
<dbReference type="InParanoid" id="Q8VFK7"/>
<dbReference type="OMA" id="MRLMKEV"/>
<dbReference type="OrthoDB" id="9513350at2759"/>
<dbReference type="PhylomeDB" id="Q8VFK7"/>
<dbReference type="TreeFam" id="TF352753"/>
<dbReference type="BioGRID-ORCS" id="258573">
    <property type="hits" value="1 hit in 70 CRISPR screens"/>
</dbReference>
<dbReference type="PRO" id="PR:Q8VFK7"/>
<dbReference type="Proteomes" id="UP000000589">
    <property type="component" value="Chromosome 2"/>
</dbReference>
<dbReference type="RNAct" id="Q8VFK7">
    <property type="molecule type" value="protein"/>
</dbReference>
<dbReference type="ExpressionAtlas" id="Q8VFK7">
    <property type="expression patterns" value="baseline and differential"/>
</dbReference>
<dbReference type="GO" id="GO:0016020">
    <property type="term" value="C:membrane"/>
    <property type="evidence" value="ECO:0000247"/>
    <property type="project" value="MGI"/>
</dbReference>
<dbReference type="GO" id="GO:0005886">
    <property type="term" value="C:plasma membrane"/>
    <property type="evidence" value="ECO:0007669"/>
    <property type="project" value="UniProtKB-SubCell"/>
</dbReference>
<dbReference type="GO" id="GO:0004930">
    <property type="term" value="F:G protein-coupled receptor activity"/>
    <property type="evidence" value="ECO:0007669"/>
    <property type="project" value="UniProtKB-KW"/>
</dbReference>
<dbReference type="GO" id="GO:0004984">
    <property type="term" value="F:olfactory receptor activity"/>
    <property type="evidence" value="ECO:0000247"/>
    <property type="project" value="MGI"/>
</dbReference>
<dbReference type="GO" id="GO:0007186">
    <property type="term" value="P:G protein-coupled receptor signaling pathway"/>
    <property type="evidence" value="ECO:0000247"/>
    <property type="project" value="MGI"/>
</dbReference>
<dbReference type="GO" id="GO:0007608">
    <property type="term" value="P:sensory perception of smell"/>
    <property type="evidence" value="ECO:0000247"/>
    <property type="project" value="MGI"/>
</dbReference>
<dbReference type="CDD" id="cd15943">
    <property type="entry name" value="7tmA_OR5AP2-like"/>
    <property type="match status" value="1"/>
</dbReference>
<dbReference type="FunFam" id="1.20.1070.10:FF:000003">
    <property type="entry name" value="Olfactory receptor"/>
    <property type="match status" value="1"/>
</dbReference>
<dbReference type="Gene3D" id="1.20.1070.10">
    <property type="entry name" value="Rhodopsin 7-helix transmembrane proteins"/>
    <property type="match status" value="1"/>
</dbReference>
<dbReference type="InterPro" id="IPR000276">
    <property type="entry name" value="GPCR_Rhodpsn"/>
</dbReference>
<dbReference type="InterPro" id="IPR017452">
    <property type="entry name" value="GPCR_Rhodpsn_7TM"/>
</dbReference>
<dbReference type="InterPro" id="IPR000725">
    <property type="entry name" value="Olfact_rcpt"/>
</dbReference>
<dbReference type="PANTHER" id="PTHR48018">
    <property type="entry name" value="OLFACTORY RECEPTOR"/>
    <property type="match status" value="1"/>
</dbReference>
<dbReference type="Pfam" id="PF13853">
    <property type="entry name" value="7tm_4"/>
    <property type="match status" value="1"/>
</dbReference>
<dbReference type="PRINTS" id="PR00237">
    <property type="entry name" value="GPCRRHODOPSN"/>
</dbReference>
<dbReference type="PRINTS" id="PR00245">
    <property type="entry name" value="OLFACTORYR"/>
</dbReference>
<dbReference type="SUPFAM" id="SSF81321">
    <property type="entry name" value="Family A G protein-coupled receptor-like"/>
    <property type="match status" value="1"/>
</dbReference>
<dbReference type="PROSITE" id="PS00237">
    <property type="entry name" value="G_PROTEIN_RECEP_F1_1"/>
    <property type="match status" value="1"/>
</dbReference>
<dbReference type="PROSITE" id="PS50262">
    <property type="entry name" value="G_PROTEIN_RECEP_F1_2"/>
    <property type="match status" value="1"/>
</dbReference>
<protein>
    <recommendedName>
        <fullName evidence="3">Olfactory receptor 5AP2</fullName>
    </recommendedName>
    <alternativeName>
        <fullName evidence="5">Olfactory receptor 1020</fullName>
    </alternativeName>
    <alternativeName>
        <fullName evidence="5">Olfactory receptor 201-2</fullName>
    </alternativeName>
</protein>